<feature type="chain" id="PRO_0000085001" description="Catalase">
    <location>
        <begin position="1"/>
        <end position="505"/>
    </location>
</feature>
<feature type="region of interest" description="Disordered" evidence="3">
    <location>
        <begin position="1"/>
        <end position="25"/>
    </location>
</feature>
<feature type="active site" evidence="2">
    <location>
        <position position="56"/>
    </location>
</feature>
<feature type="active site" evidence="2">
    <location>
        <position position="129"/>
    </location>
</feature>
<feature type="binding site" description="axial binding residue" evidence="1">
    <location>
        <position position="339"/>
    </location>
    <ligand>
        <name>heme</name>
        <dbReference type="ChEBI" id="CHEBI:30413"/>
    </ligand>
    <ligandPart>
        <name>Fe</name>
        <dbReference type="ChEBI" id="CHEBI:18248"/>
    </ligandPart>
</feature>
<organism>
    <name type="scientific">Staphylococcus aureus (strain MSSA476)</name>
    <dbReference type="NCBI Taxonomy" id="282459"/>
    <lineage>
        <taxon>Bacteria</taxon>
        <taxon>Bacillati</taxon>
        <taxon>Bacillota</taxon>
        <taxon>Bacilli</taxon>
        <taxon>Bacillales</taxon>
        <taxon>Staphylococcaceae</taxon>
        <taxon>Staphylococcus</taxon>
    </lineage>
</organism>
<evidence type="ECO:0000250" key="1"/>
<evidence type="ECO:0000255" key="2">
    <source>
        <dbReference type="PROSITE-ProRule" id="PRU10013"/>
    </source>
</evidence>
<evidence type="ECO:0000256" key="3">
    <source>
        <dbReference type="SAM" id="MobiDB-lite"/>
    </source>
</evidence>
<evidence type="ECO:0000305" key="4"/>
<dbReference type="EC" id="1.11.1.6"/>
<dbReference type="EMBL" id="BX571857">
    <property type="protein sequence ID" value="CAG43052.1"/>
    <property type="molecule type" value="Genomic_DNA"/>
</dbReference>
<dbReference type="RefSeq" id="WP_000082539.1">
    <property type="nucleotide sequence ID" value="NC_002953.3"/>
</dbReference>
<dbReference type="SMR" id="Q6G9M4"/>
<dbReference type="KEGG" id="sas:SAS1274"/>
<dbReference type="HOGENOM" id="CLU_010645_2_0_9"/>
<dbReference type="GO" id="GO:0005737">
    <property type="term" value="C:cytoplasm"/>
    <property type="evidence" value="ECO:0007669"/>
    <property type="project" value="TreeGrafter"/>
</dbReference>
<dbReference type="GO" id="GO:0004096">
    <property type="term" value="F:catalase activity"/>
    <property type="evidence" value="ECO:0007669"/>
    <property type="project" value="UniProtKB-EC"/>
</dbReference>
<dbReference type="GO" id="GO:0020037">
    <property type="term" value="F:heme binding"/>
    <property type="evidence" value="ECO:0007669"/>
    <property type="project" value="InterPro"/>
</dbReference>
<dbReference type="GO" id="GO:0046872">
    <property type="term" value="F:metal ion binding"/>
    <property type="evidence" value="ECO:0007669"/>
    <property type="project" value="UniProtKB-KW"/>
</dbReference>
<dbReference type="GO" id="GO:0042744">
    <property type="term" value="P:hydrogen peroxide catabolic process"/>
    <property type="evidence" value="ECO:0007669"/>
    <property type="project" value="UniProtKB-KW"/>
</dbReference>
<dbReference type="GO" id="GO:0042542">
    <property type="term" value="P:response to hydrogen peroxide"/>
    <property type="evidence" value="ECO:0007669"/>
    <property type="project" value="TreeGrafter"/>
</dbReference>
<dbReference type="CDD" id="cd08156">
    <property type="entry name" value="catalase_clade_3"/>
    <property type="match status" value="1"/>
</dbReference>
<dbReference type="FunFam" id="2.40.180.10:FF:000001">
    <property type="entry name" value="Catalase"/>
    <property type="match status" value="1"/>
</dbReference>
<dbReference type="Gene3D" id="2.40.180.10">
    <property type="entry name" value="Catalase core domain"/>
    <property type="match status" value="1"/>
</dbReference>
<dbReference type="InterPro" id="IPR018028">
    <property type="entry name" value="Catalase"/>
</dbReference>
<dbReference type="InterPro" id="IPR040333">
    <property type="entry name" value="Catalase_3"/>
</dbReference>
<dbReference type="InterPro" id="IPR024708">
    <property type="entry name" value="Catalase_AS"/>
</dbReference>
<dbReference type="InterPro" id="IPR024711">
    <property type="entry name" value="Catalase_clade1/3"/>
</dbReference>
<dbReference type="InterPro" id="IPR011614">
    <property type="entry name" value="Catalase_core"/>
</dbReference>
<dbReference type="InterPro" id="IPR002226">
    <property type="entry name" value="Catalase_haem_BS"/>
</dbReference>
<dbReference type="InterPro" id="IPR010582">
    <property type="entry name" value="Catalase_immune_responsive"/>
</dbReference>
<dbReference type="InterPro" id="IPR020835">
    <property type="entry name" value="Catalase_sf"/>
</dbReference>
<dbReference type="PANTHER" id="PTHR11465">
    <property type="entry name" value="CATALASE"/>
    <property type="match status" value="1"/>
</dbReference>
<dbReference type="PANTHER" id="PTHR11465:SF61">
    <property type="entry name" value="CATALASE"/>
    <property type="match status" value="1"/>
</dbReference>
<dbReference type="Pfam" id="PF00199">
    <property type="entry name" value="Catalase"/>
    <property type="match status" value="1"/>
</dbReference>
<dbReference type="Pfam" id="PF06628">
    <property type="entry name" value="Catalase-rel"/>
    <property type="match status" value="1"/>
</dbReference>
<dbReference type="PIRSF" id="PIRSF038928">
    <property type="entry name" value="Catalase_clade1-3"/>
    <property type="match status" value="1"/>
</dbReference>
<dbReference type="PRINTS" id="PR00067">
    <property type="entry name" value="CATALASE"/>
</dbReference>
<dbReference type="SMART" id="SM01060">
    <property type="entry name" value="Catalase"/>
    <property type="match status" value="1"/>
</dbReference>
<dbReference type="SUPFAM" id="SSF56634">
    <property type="entry name" value="Heme-dependent catalase-like"/>
    <property type="match status" value="1"/>
</dbReference>
<dbReference type="PROSITE" id="PS00437">
    <property type="entry name" value="CATALASE_1"/>
    <property type="match status" value="1"/>
</dbReference>
<dbReference type="PROSITE" id="PS00438">
    <property type="entry name" value="CATALASE_2"/>
    <property type="match status" value="1"/>
</dbReference>
<dbReference type="PROSITE" id="PS51402">
    <property type="entry name" value="CATALASE_3"/>
    <property type="match status" value="1"/>
</dbReference>
<keyword id="KW-0349">Heme</keyword>
<keyword id="KW-0376">Hydrogen peroxide</keyword>
<keyword id="KW-0408">Iron</keyword>
<keyword id="KW-0479">Metal-binding</keyword>
<keyword id="KW-0560">Oxidoreductase</keyword>
<keyword id="KW-0575">Peroxidase</keyword>
<proteinExistence type="inferred from homology"/>
<gene>
    <name type="primary">katA</name>
    <name type="ordered locus">SAS1274</name>
</gene>
<name>CATA_STAAS</name>
<sequence>MSQQDKKLTGVFGHPVSDRENSMTAGPRGPLLMQDIYFLEQMSQFDREVIPERRMHAKGSGAFGTFTVTKDITKYTNAKIFSEIGKQTEMFARFSTVAGERGAADAERDIRGFALKFYTEEGNWDLVGNNTPVFFFRDPKLFVSLNRAVKRDPRTNMRDAQNNWDFWTGLPEALHQVTILMSDRGIPKDLRHMHGFGSHTYSMYNDSGERVWVKFHFRTQQGIENLTDEEAAEIIATDRDSSQRDLFEAIEKGDYPKWTMYIQVMTEEQAKNHKDNPFDLTKVWYHDEYPLIEVGEFELNRNPDNYFMDVEQAAFAPTNIIPGLDFSPDKMLQGRLFSYGDAQRYRLGVNHWQIPVNQPKGVGIENICPFSRDGQMRVVDNNQGGGTHYYPNNHGKFDSQPEYKKPPFPTDGYGYEYNQRQDDDNYFEQPGKLFRLQSEDAKERIFTNTANAMEGVTDDVKRRHIRHCYKADPEYGKGVAKALGIDINSIDLETENDETYENFEK</sequence>
<comment type="function">
    <text evidence="1">Decomposes hydrogen peroxide into water and oxygen; serves to protect cells from the toxic effects of hydrogen peroxide.</text>
</comment>
<comment type="catalytic activity">
    <reaction evidence="2">
        <text>2 H2O2 = O2 + 2 H2O</text>
        <dbReference type="Rhea" id="RHEA:20309"/>
        <dbReference type="ChEBI" id="CHEBI:15377"/>
        <dbReference type="ChEBI" id="CHEBI:15379"/>
        <dbReference type="ChEBI" id="CHEBI:16240"/>
        <dbReference type="EC" id="1.11.1.6"/>
    </reaction>
</comment>
<comment type="cofactor">
    <cofactor evidence="1">
        <name>heme</name>
        <dbReference type="ChEBI" id="CHEBI:30413"/>
    </cofactor>
</comment>
<comment type="subunit">
    <text evidence="1">Homodimer.</text>
</comment>
<comment type="similarity">
    <text evidence="4">Belongs to the catalase family.</text>
</comment>
<accession>Q6G9M4</accession>
<reference key="1">
    <citation type="journal article" date="2004" name="Proc. Natl. Acad. Sci. U.S.A.">
        <title>Complete genomes of two clinical Staphylococcus aureus strains: evidence for the rapid evolution of virulence and drug resistance.</title>
        <authorList>
            <person name="Holden M.T.G."/>
            <person name="Feil E.J."/>
            <person name="Lindsay J.A."/>
            <person name="Peacock S.J."/>
            <person name="Day N.P.J."/>
            <person name="Enright M.C."/>
            <person name="Foster T.J."/>
            <person name="Moore C.E."/>
            <person name="Hurst L."/>
            <person name="Atkin R."/>
            <person name="Barron A."/>
            <person name="Bason N."/>
            <person name="Bentley S.D."/>
            <person name="Chillingworth C."/>
            <person name="Chillingworth T."/>
            <person name="Churcher C."/>
            <person name="Clark L."/>
            <person name="Corton C."/>
            <person name="Cronin A."/>
            <person name="Doggett J."/>
            <person name="Dowd L."/>
            <person name="Feltwell T."/>
            <person name="Hance Z."/>
            <person name="Harris B."/>
            <person name="Hauser H."/>
            <person name="Holroyd S."/>
            <person name="Jagels K."/>
            <person name="James K.D."/>
            <person name="Lennard N."/>
            <person name="Line A."/>
            <person name="Mayes R."/>
            <person name="Moule S."/>
            <person name="Mungall K."/>
            <person name="Ormond D."/>
            <person name="Quail M.A."/>
            <person name="Rabbinowitsch E."/>
            <person name="Rutherford K.M."/>
            <person name="Sanders M."/>
            <person name="Sharp S."/>
            <person name="Simmonds M."/>
            <person name="Stevens K."/>
            <person name="Whitehead S."/>
            <person name="Barrell B.G."/>
            <person name="Spratt B.G."/>
            <person name="Parkhill J."/>
        </authorList>
    </citation>
    <scope>NUCLEOTIDE SEQUENCE [LARGE SCALE GENOMIC DNA]</scope>
    <source>
        <strain>MSSA476</strain>
    </source>
</reference>
<protein>
    <recommendedName>
        <fullName>Catalase</fullName>
        <ecNumber>1.11.1.6</ecNumber>
    </recommendedName>
</protein>